<feature type="chain" id="PRO_0000358081" description="NADH-quinone oxidoreductase subunit C">
    <location>
        <begin position="1"/>
        <end position="166"/>
    </location>
</feature>
<sequence>MTQQVKQALAAYDVVREKFGDAVSAFDSNETMPFFEVLDTDQWPDIALFMRDHPKLKFNYMACLSGVDYPQEEKLGIVCNLESVAALGHRVAVKVRCSRDGGSIPSVACVWHTANWHEREAYDMFGMLFSGHPDLRRILCPEDWEGFPLRKDYKVQETYHGIKVPY</sequence>
<protein>
    <recommendedName>
        <fullName evidence="1">NADH-quinone oxidoreductase subunit C</fullName>
        <ecNumber evidence="1">7.1.1.-</ecNumber>
    </recommendedName>
    <alternativeName>
        <fullName evidence="1">NADH dehydrogenase I subunit C</fullName>
    </alternativeName>
    <alternativeName>
        <fullName evidence="1">NDH-1 subunit C</fullName>
    </alternativeName>
</protein>
<reference key="1">
    <citation type="submission" date="2006-12" db="EMBL/GenBank/DDBJ databases">
        <title>Complete sequence of Chlorobium phaeobacteroides DSM 266.</title>
        <authorList>
            <consortium name="US DOE Joint Genome Institute"/>
            <person name="Copeland A."/>
            <person name="Lucas S."/>
            <person name="Lapidus A."/>
            <person name="Barry K."/>
            <person name="Detter J.C."/>
            <person name="Glavina del Rio T."/>
            <person name="Hammon N."/>
            <person name="Israni S."/>
            <person name="Pitluck S."/>
            <person name="Goltsman E."/>
            <person name="Schmutz J."/>
            <person name="Larimer F."/>
            <person name="Land M."/>
            <person name="Hauser L."/>
            <person name="Mikhailova N."/>
            <person name="Li T."/>
            <person name="Overmann J."/>
            <person name="Bryant D.A."/>
            <person name="Richardson P."/>
        </authorList>
    </citation>
    <scope>NUCLEOTIDE SEQUENCE [LARGE SCALE GENOMIC DNA]</scope>
    <source>
        <strain>DSM 266 / SMG 266 / 2430</strain>
    </source>
</reference>
<evidence type="ECO:0000255" key="1">
    <source>
        <dbReference type="HAMAP-Rule" id="MF_01357"/>
    </source>
</evidence>
<organism>
    <name type="scientific">Chlorobium phaeobacteroides (strain DSM 266 / SMG 266 / 2430)</name>
    <dbReference type="NCBI Taxonomy" id="290317"/>
    <lineage>
        <taxon>Bacteria</taxon>
        <taxon>Pseudomonadati</taxon>
        <taxon>Chlorobiota</taxon>
        <taxon>Chlorobiia</taxon>
        <taxon>Chlorobiales</taxon>
        <taxon>Chlorobiaceae</taxon>
        <taxon>Chlorobium/Pelodictyon group</taxon>
        <taxon>Chlorobium</taxon>
    </lineage>
</organism>
<gene>
    <name evidence="1" type="primary">nuoC</name>
    <name type="ordered locus">Cpha266_0963</name>
</gene>
<dbReference type="EC" id="7.1.1.-" evidence="1"/>
<dbReference type="EMBL" id="CP000492">
    <property type="protein sequence ID" value="ABL65011.1"/>
    <property type="molecule type" value="Genomic_DNA"/>
</dbReference>
<dbReference type="RefSeq" id="WP_011744838.1">
    <property type="nucleotide sequence ID" value="NC_008639.1"/>
</dbReference>
<dbReference type="SMR" id="A1BF34"/>
<dbReference type="STRING" id="290317.Cpha266_0963"/>
<dbReference type="KEGG" id="cph:Cpha266_0963"/>
<dbReference type="eggNOG" id="COG0852">
    <property type="taxonomic scope" value="Bacteria"/>
</dbReference>
<dbReference type="HOGENOM" id="CLU_042628_6_3_10"/>
<dbReference type="OrthoDB" id="9803286at2"/>
<dbReference type="Proteomes" id="UP000008701">
    <property type="component" value="Chromosome"/>
</dbReference>
<dbReference type="GO" id="GO:0005886">
    <property type="term" value="C:plasma membrane"/>
    <property type="evidence" value="ECO:0007669"/>
    <property type="project" value="UniProtKB-SubCell"/>
</dbReference>
<dbReference type="GO" id="GO:0008137">
    <property type="term" value="F:NADH dehydrogenase (ubiquinone) activity"/>
    <property type="evidence" value="ECO:0007669"/>
    <property type="project" value="InterPro"/>
</dbReference>
<dbReference type="GO" id="GO:0050136">
    <property type="term" value="F:NADH:ubiquinone reductase (non-electrogenic) activity"/>
    <property type="evidence" value="ECO:0007669"/>
    <property type="project" value="UniProtKB-UniRule"/>
</dbReference>
<dbReference type="GO" id="GO:0048038">
    <property type="term" value="F:quinone binding"/>
    <property type="evidence" value="ECO:0007669"/>
    <property type="project" value="UniProtKB-KW"/>
</dbReference>
<dbReference type="Gene3D" id="3.30.460.80">
    <property type="entry name" value="NADH:ubiquinone oxidoreductase, 30kDa subunit"/>
    <property type="match status" value="1"/>
</dbReference>
<dbReference type="HAMAP" id="MF_01357">
    <property type="entry name" value="NDH1_NuoC"/>
    <property type="match status" value="1"/>
</dbReference>
<dbReference type="InterPro" id="IPR010218">
    <property type="entry name" value="NADH_DH_suC"/>
</dbReference>
<dbReference type="InterPro" id="IPR037232">
    <property type="entry name" value="NADH_quin_OxRdtase_su_C/D-like"/>
</dbReference>
<dbReference type="InterPro" id="IPR001268">
    <property type="entry name" value="NADH_UbQ_OxRdtase_30kDa_su"/>
</dbReference>
<dbReference type="InterPro" id="IPR020396">
    <property type="entry name" value="NADH_UbQ_OxRdtase_CS"/>
</dbReference>
<dbReference type="NCBIfam" id="TIGR01961">
    <property type="entry name" value="NuoC_fam"/>
    <property type="match status" value="1"/>
</dbReference>
<dbReference type="PANTHER" id="PTHR10884:SF14">
    <property type="entry name" value="NADH DEHYDROGENASE [UBIQUINONE] IRON-SULFUR PROTEIN 3, MITOCHONDRIAL"/>
    <property type="match status" value="1"/>
</dbReference>
<dbReference type="PANTHER" id="PTHR10884">
    <property type="entry name" value="NADH DEHYDROGENASE UBIQUINONE IRON-SULFUR PROTEIN 3"/>
    <property type="match status" value="1"/>
</dbReference>
<dbReference type="Pfam" id="PF00329">
    <property type="entry name" value="Complex1_30kDa"/>
    <property type="match status" value="1"/>
</dbReference>
<dbReference type="SUPFAM" id="SSF143243">
    <property type="entry name" value="Nqo5-like"/>
    <property type="match status" value="1"/>
</dbReference>
<dbReference type="PROSITE" id="PS00542">
    <property type="entry name" value="COMPLEX1_30K"/>
    <property type="match status" value="1"/>
</dbReference>
<accession>A1BF34</accession>
<proteinExistence type="inferred from homology"/>
<name>NUOC_CHLPD</name>
<comment type="function">
    <text evidence="1">NDH-1 shuttles electrons from NADH, via FMN and iron-sulfur (Fe-S) centers, to quinones in the respiratory chain. The immediate electron acceptor for the enzyme in this species is believed to be a menaquinone. Couples the redox reaction to proton translocation (for every two electrons transferred, four hydrogen ions are translocated across the cytoplasmic membrane), and thus conserves the redox energy in a proton gradient.</text>
</comment>
<comment type="catalytic activity">
    <reaction evidence="1">
        <text>a quinone + NADH + 5 H(+)(in) = a quinol + NAD(+) + 4 H(+)(out)</text>
        <dbReference type="Rhea" id="RHEA:57888"/>
        <dbReference type="ChEBI" id="CHEBI:15378"/>
        <dbReference type="ChEBI" id="CHEBI:24646"/>
        <dbReference type="ChEBI" id="CHEBI:57540"/>
        <dbReference type="ChEBI" id="CHEBI:57945"/>
        <dbReference type="ChEBI" id="CHEBI:132124"/>
    </reaction>
</comment>
<comment type="subunit">
    <text evidence="1">NDH-1 is composed of 14 different subunits. Subunits NuoB, C, D, E, F, and G constitute the peripheral sector of the complex.</text>
</comment>
<comment type="subcellular location">
    <subcellularLocation>
        <location evidence="1">Cell inner membrane</location>
        <topology evidence="1">Peripheral membrane protein</topology>
        <orientation evidence="1">Cytoplasmic side</orientation>
    </subcellularLocation>
</comment>
<comment type="similarity">
    <text evidence="1">Belongs to the complex I 30 kDa subunit family.</text>
</comment>
<keyword id="KW-0997">Cell inner membrane</keyword>
<keyword id="KW-1003">Cell membrane</keyword>
<keyword id="KW-0472">Membrane</keyword>
<keyword id="KW-0520">NAD</keyword>
<keyword id="KW-0874">Quinone</keyword>
<keyword id="KW-1185">Reference proteome</keyword>
<keyword id="KW-1278">Translocase</keyword>
<keyword id="KW-0813">Transport</keyword>